<keyword id="KW-0007">Acetylation</keyword>
<keyword id="KW-0963">Cytoplasm</keyword>
<keyword id="KW-0479">Metal-binding</keyword>
<keyword id="KW-0597">Phosphoprotein</keyword>
<keyword id="KW-1185">Reference proteome</keyword>
<keyword id="KW-0862">Zinc</keyword>
<dbReference type="EMBL" id="AB012727">
    <property type="protein sequence ID" value="BAA87048.1"/>
    <property type="molecule type" value="mRNA"/>
</dbReference>
<dbReference type="EMBL" id="BC021593">
    <property type="protein sequence ID" value="AAH21593.1"/>
    <property type="molecule type" value="mRNA"/>
</dbReference>
<dbReference type="CCDS" id="CCDS29479.1"/>
<dbReference type="RefSeq" id="NP_065237.3">
    <property type="nucleotide sequence ID" value="NM_020491.5"/>
</dbReference>
<dbReference type="SMR" id="P56873"/>
<dbReference type="BioGRID" id="207948">
    <property type="interactions" value="2"/>
</dbReference>
<dbReference type="FunCoup" id="P56873">
    <property type="interactions" value="85"/>
</dbReference>
<dbReference type="IntAct" id="P56873">
    <property type="interactions" value="4"/>
</dbReference>
<dbReference type="MINT" id="P56873"/>
<dbReference type="STRING" id="10090.ENSMUSP00000025885"/>
<dbReference type="GlyGen" id="P56873">
    <property type="glycosylation" value="1 site, 1 O-linked glycan (1 site)"/>
</dbReference>
<dbReference type="iPTMnet" id="P56873"/>
<dbReference type="PhosphoSitePlus" id="P56873"/>
<dbReference type="SwissPalm" id="P56873"/>
<dbReference type="PaxDb" id="10090-ENSMUSP00000025885"/>
<dbReference type="PeptideAtlas" id="P56873"/>
<dbReference type="ProteomicsDB" id="257416"/>
<dbReference type="Pumba" id="P56873"/>
<dbReference type="DNASU" id="56390"/>
<dbReference type="Ensembl" id="ENSMUST00000025885.6">
    <property type="protein sequence ID" value="ENSMUSP00000025885.5"/>
    <property type="gene ID" value="ENSMUSG00000079478.10"/>
</dbReference>
<dbReference type="Ensembl" id="ENSMUST00000160852.8">
    <property type="protein sequence ID" value="ENSMUSP00000125570.2"/>
    <property type="gene ID" value="ENSMUSG00000118125.2"/>
</dbReference>
<dbReference type="GeneID" id="56390"/>
<dbReference type="KEGG" id="mmu:56390"/>
<dbReference type="UCSC" id="uc008gfd.2">
    <property type="organism name" value="mouse"/>
</dbReference>
<dbReference type="AGR" id="MGI:1913482"/>
<dbReference type="CTD" id="10534"/>
<dbReference type="MGI" id="MGI:1913482">
    <property type="gene designation" value="Znrd2"/>
</dbReference>
<dbReference type="VEuPathDB" id="HostDB:ENSMUSG00000079478"/>
<dbReference type="VEuPathDB" id="HostDB:ENSMUSG00000118125"/>
<dbReference type="eggNOG" id="KOG4537">
    <property type="taxonomic scope" value="Eukaryota"/>
</dbReference>
<dbReference type="GeneTree" id="ENSGT00390000013169"/>
<dbReference type="HOGENOM" id="CLU_058702_0_0_1"/>
<dbReference type="InParanoid" id="P56873"/>
<dbReference type="OMA" id="TYCVACQ"/>
<dbReference type="OrthoDB" id="28939at2759"/>
<dbReference type="PhylomeDB" id="P56873"/>
<dbReference type="TreeFam" id="TF320182"/>
<dbReference type="BioGRID-ORCS" id="56390">
    <property type="hits" value="3 hits in 77 CRISPR screens"/>
</dbReference>
<dbReference type="PRO" id="PR:P56873"/>
<dbReference type="Proteomes" id="UP000000589">
    <property type="component" value="Chromosome 19"/>
</dbReference>
<dbReference type="RNAct" id="P56873">
    <property type="molecule type" value="protein"/>
</dbReference>
<dbReference type="Bgee" id="ENSMUSG00000079478">
    <property type="expression patterns" value="Expressed in epiblast cell in embryo and 73 other cell types or tissues"/>
</dbReference>
<dbReference type="ExpressionAtlas" id="P56873">
    <property type="expression patterns" value="baseline and differential"/>
</dbReference>
<dbReference type="GO" id="GO:0005737">
    <property type="term" value="C:cytoplasm"/>
    <property type="evidence" value="ECO:0007669"/>
    <property type="project" value="UniProtKB-SubCell"/>
</dbReference>
<dbReference type="GO" id="GO:0042802">
    <property type="term" value="F:identical protein binding"/>
    <property type="evidence" value="ECO:0000353"/>
    <property type="project" value="MGI"/>
</dbReference>
<dbReference type="GO" id="GO:0046872">
    <property type="term" value="F:metal ion binding"/>
    <property type="evidence" value="ECO:0007669"/>
    <property type="project" value="UniProtKB-KW"/>
</dbReference>
<dbReference type="InterPro" id="IPR009563">
    <property type="entry name" value="SSSCA1"/>
</dbReference>
<dbReference type="InterPro" id="IPR051888">
    <property type="entry name" value="UPF0148_domain"/>
</dbReference>
<dbReference type="PANTHER" id="PTHR16537:SF1">
    <property type="entry name" value="PROTEIN ZNRD2"/>
    <property type="match status" value="1"/>
</dbReference>
<dbReference type="PANTHER" id="PTHR16537">
    <property type="entry name" value="SJOEGREN SYNDROME/SCLERODERMA AUTOANTIGEN 1"/>
    <property type="match status" value="1"/>
</dbReference>
<dbReference type="Pfam" id="PF06677">
    <property type="entry name" value="Auto_anti-p27"/>
    <property type="match status" value="1"/>
</dbReference>
<evidence type="ECO:0000250" key="1">
    <source>
        <dbReference type="UniProtKB" id="O60232"/>
    </source>
</evidence>
<evidence type="ECO:0000256" key="2">
    <source>
        <dbReference type="SAM" id="MobiDB-lite"/>
    </source>
</evidence>
<evidence type="ECO:0000269" key="3">
    <source>
    </source>
</evidence>
<evidence type="ECO:0000305" key="4"/>
<evidence type="ECO:0000312" key="5">
    <source>
        <dbReference type="MGI" id="MGI:1913482"/>
    </source>
</evidence>
<organism>
    <name type="scientific">Mus musculus</name>
    <name type="common">Mouse</name>
    <dbReference type="NCBI Taxonomy" id="10090"/>
    <lineage>
        <taxon>Eukaryota</taxon>
        <taxon>Metazoa</taxon>
        <taxon>Chordata</taxon>
        <taxon>Craniata</taxon>
        <taxon>Vertebrata</taxon>
        <taxon>Euteleostomi</taxon>
        <taxon>Mammalia</taxon>
        <taxon>Eutheria</taxon>
        <taxon>Euarchontoglires</taxon>
        <taxon>Glires</taxon>
        <taxon>Rodentia</taxon>
        <taxon>Myomorpha</taxon>
        <taxon>Muroidea</taxon>
        <taxon>Muridae</taxon>
        <taxon>Murinae</taxon>
        <taxon>Mus</taxon>
        <taxon>Mus</taxon>
    </lineage>
</organism>
<sequence length="199" mass="21336">MALNGADVDDFTWEPPTEAETKVLQARRERQDRISRLMGDYLLRGYRMLGDTCADCGTILLQDKQRKIYCVACQELDSDVDKDNPALNAQAALSQAREHQLASSTEPASSSRPPSQPPVPRPEHCEGAAAGLKAAQAPPLPAAPPNTDAVASTQTALLQKLTWASVELGSSTSLETSIQLCGLIRACAEALGSLKQLDH</sequence>
<accession>P56873</accession>
<gene>
    <name type="primary">Znrd2</name>
    <name type="synonym">C184l</name>
    <name evidence="5" type="synonym">Sssca1</name>
</gene>
<comment type="function">
    <text evidence="1">Might play a role in mitosis. Could be a centromere-associated protein. Antigenic molecule. May induce anti-centromere antibodies.</text>
</comment>
<comment type="cofactor">
    <cofactor evidence="1">
        <name>Zn(2+)</name>
        <dbReference type="ChEBI" id="CHEBI:29105"/>
    </cofactor>
    <text evidence="1">Binds 1 zinc ion per subunit.</text>
</comment>
<comment type="subunit">
    <text evidence="1">Homodimer.</text>
</comment>
<comment type="subcellular location">
    <subcellularLocation>
        <location evidence="1">Cytoplasm</location>
    </subcellularLocation>
</comment>
<comment type="tissue specificity">
    <text evidence="3">Expressed in the early postnatal brain.</text>
</comment>
<comment type="developmental stage">
    <text evidence="3">Expressed in forebrain at 16 dpc.</text>
</comment>
<comment type="miscellaneous">
    <text>Two ORFs are contained in the Sssca1 gene, but only this protein is efficiently translated and expressed.</text>
</comment>
<feature type="initiator methionine" description="Removed" evidence="1">
    <location>
        <position position="1"/>
    </location>
</feature>
<feature type="chain" id="PRO_0000072202" description="Protein ZNRD2">
    <location>
        <begin position="2"/>
        <end position="199"/>
    </location>
</feature>
<feature type="region of interest" description="Disordered" evidence="2">
    <location>
        <begin position="93"/>
        <end position="148"/>
    </location>
</feature>
<feature type="short sequence motif" description="Nuclear export signal" evidence="1">
    <location>
        <begin position="173"/>
        <end position="194"/>
    </location>
</feature>
<feature type="compositionally biased region" description="Low complexity" evidence="2">
    <location>
        <begin position="127"/>
        <end position="137"/>
    </location>
</feature>
<feature type="binding site" evidence="1">
    <location>
        <position position="53"/>
    </location>
    <ligand>
        <name>Zn(2+)</name>
        <dbReference type="ChEBI" id="CHEBI:29105"/>
    </ligand>
</feature>
<feature type="binding site" evidence="1">
    <location>
        <position position="56"/>
    </location>
    <ligand>
        <name>Zn(2+)</name>
        <dbReference type="ChEBI" id="CHEBI:29105"/>
    </ligand>
</feature>
<feature type="binding site" evidence="1">
    <location>
        <position position="70"/>
    </location>
    <ligand>
        <name>Zn(2+)</name>
        <dbReference type="ChEBI" id="CHEBI:29105"/>
    </ligand>
</feature>
<feature type="binding site" evidence="1">
    <location>
        <position position="73"/>
    </location>
    <ligand>
        <name>Zn(2+)</name>
        <dbReference type="ChEBI" id="CHEBI:29105"/>
    </ligand>
</feature>
<feature type="modified residue" description="N-acetylalanine" evidence="1">
    <location>
        <position position="2"/>
    </location>
</feature>
<feature type="modified residue" description="Phosphoserine" evidence="1">
    <location>
        <position position="94"/>
    </location>
</feature>
<protein>
    <recommendedName>
        <fullName evidence="4">Protein ZNRD2</fullName>
    </recommendedName>
    <alternativeName>
        <fullName>Autoantigen p27 homolog</fullName>
    </alternativeName>
    <alternativeName>
        <fullName>Protein C184L</fullName>
    </alternativeName>
    <alternativeName>
        <fullName evidence="4">Protein zinc ribbon domain type 2</fullName>
    </alternativeName>
    <alternativeName>
        <fullName>Sjoegren syndrome/scleroderma autoantigen 1 homolog</fullName>
    </alternativeName>
    <alternativeName>
        <fullName>Zinc ribbon domain-containing protein 2</fullName>
    </alternativeName>
</protein>
<reference key="1">
    <citation type="journal article" date="1999" name="Biochem. Biophys. Res. Commun.">
        <title>Novel related cDNAs (C184L, C184M, and C184S) from developing mouse brain encoding two apparently unrelated proteins.</title>
        <authorList>
            <person name="Sakuma-Takagi M."/>
            <person name="Tohyama Y."/>
            <person name="Kasama-Yoshida H."/>
            <person name="Sakagami H."/>
            <person name="Kondo H."/>
            <person name="Kurihara T."/>
        </authorList>
    </citation>
    <scope>NUCLEOTIDE SEQUENCE [MRNA]</scope>
    <scope>DEVELOPMENTAL STAGE</scope>
    <scope>TISSUE SPECIFICITY</scope>
    <source>
        <strain>ICR</strain>
        <tissue>Forebrain</tissue>
    </source>
</reference>
<reference key="2">
    <citation type="journal article" date="2004" name="Genome Res.">
        <title>The status, quality, and expansion of the NIH full-length cDNA project: the Mammalian Gene Collection (MGC).</title>
        <authorList>
            <consortium name="The MGC Project Team"/>
        </authorList>
    </citation>
    <scope>NUCLEOTIDE SEQUENCE [LARGE SCALE MRNA]</scope>
    <source>
        <strain>FVB/N</strain>
        <tissue>Liver</tissue>
    </source>
</reference>
<reference key="3">
    <citation type="journal article" date="2010" name="Cell">
        <title>A tissue-specific atlas of mouse protein phosphorylation and expression.</title>
        <authorList>
            <person name="Huttlin E.L."/>
            <person name="Jedrychowski M.P."/>
            <person name="Elias J.E."/>
            <person name="Goswami T."/>
            <person name="Rad R."/>
            <person name="Beausoleil S.A."/>
            <person name="Villen J."/>
            <person name="Haas W."/>
            <person name="Sowa M.E."/>
            <person name="Gygi S.P."/>
        </authorList>
    </citation>
    <scope>IDENTIFICATION BY MASS SPECTROMETRY [LARGE SCALE ANALYSIS]</scope>
    <source>
        <tissue>Brain</tissue>
        <tissue>Brown adipose tissue</tissue>
        <tissue>Heart</tissue>
        <tissue>Kidney</tissue>
        <tissue>Liver</tissue>
        <tissue>Lung</tissue>
        <tissue>Spleen</tissue>
        <tissue>Testis</tissue>
    </source>
</reference>
<proteinExistence type="evidence at protein level"/>
<name>ZNRD2_MOUSE</name>